<protein>
    <recommendedName>
        <fullName evidence="1">Lipoyl synthase</fullName>
        <ecNumber evidence="1">2.8.1.8</ecNumber>
    </recommendedName>
    <alternativeName>
        <fullName evidence="1">Lip-syn</fullName>
        <shortName evidence="1">LS</shortName>
    </alternativeName>
    <alternativeName>
        <fullName evidence="1">Lipoate synthase</fullName>
    </alternativeName>
    <alternativeName>
        <fullName evidence="1">Lipoic acid synthase</fullName>
    </alternativeName>
    <alternativeName>
        <fullName evidence="1">Sulfur insertion protein LipA</fullName>
    </alternativeName>
</protein>
<keyword id="KW-0004">4Fe-4S</keyword>
<keyword id="KW-0963">Cytoplasm</keyword>
<keyword id="KW-0408">Iron</keyword>
<keyword id="KW-0411">Iron-sulfur</keyword>
<keyword id="KW-0479">Metal-binding</keyword>
<keyword id="KW-1185">Reference proteome</keyword>
<keyword id="KW-0949">S-adenosyl-L-methionine</keyword>
<keyword id="KW-0808">Transferase</keyword>
<feature type="chain" id="PRO_0000325321" description="Lipoyl synthase">
    <location>
        <begin position="1"/>
        <end position="315"/>
    </location>
</feature>
<feature type="domain" description="Radical SAM core" evidence="2">
    <location>
        <begin position="74"/>
        <end position="292"/>
    </location>
</feature>
<feature type="binding site" evidence="1">
    <location>
        <position position="62"/>
    </location>
    <ligand>
        <name>[4Fe-4S] cluster</name>
        <dbReference type="ChEBI" id="CHEBI:49883"/>
        <label>1</label>
    </ligand>
</feature>
<feature type="binding site" evidence="1">
    <location>
        <position position="67"/>
    </location>
    <ligand>
        <name>[4Fe-4S] cluster</name>
        <dbReference type="ChEBI" id="CHEBI:49883"/>
        <label>1</label>
    </ligand>
</feature>
<feature type="binding site" evidence="1">
    <location>
        <position position="73"/>
    </location>
    <ligand>
        <name>[4Fe-4S] cluster</name>
        <dbReference type="ChEBI" id="CHEBI:49883"/>
        <label>1</label>
    </ligand>
</feature>
<feature type="binding site" evidence="1">
    <location>
        <position position="88"/>
    </location>
    <ligand>
        <name>[4Fe-4S] cluster</name>
        <dbReference type="ChEBI" id="CHEBI:49883"/>
        <label>2</label>
        <note>4Fe-4S-S-AdoMet</note>
    </ligand>
</feature>
<feature type="binding site" evidence="1">
    <location>
        <position position="92"/>
    </location>
    <ligand>
        <name>[4Fe-4S] cluster</name>
        <dbReference type="ChEBI" id="CHEBI:49883"/>
        <label>2</label>
        <note>4Fe-4S-S-AdoMet</note>
    </ligand>
</feature>
<feature type="binding site" evidence="1">
    <location>
        <position position="95"/>
    </location>
    <ligand>
        <name>[4Fe-4S] cluster</name>
        <dbReference type="ChEBI" id="CHEBI:49883"/>
        <label>2</label>
        <note>4Fe-4S-S-AdoMet</note>
    </ligand>
</feature>
<feature type="binding site" evidence="1">
    <location>
        <position position="302"/>
    </location>
    <ligand>
        <name>[4Fe-4S] cluster</name>
        <dbReference type="ChEBI" id="CHEBI:49883"/>
        <label>1</label>
    </ligand>
</feature>
<sequence length="315" mass="36159">MFQEIDIKSLKGKSKVARLRIKPDVNRTVIRKPKWIRTKHIFGSKVDQLKSTLRAQKLFTVCEEAQCPNLVECFNHGTATFMIMGQICTRRCPFCDVAHGKPRTLDIDEPKHLADTIKKMRLKYVVITSVDRDDLHDGGVQHFKMCIDNIRLSTPKVKIEILTPDFKGRIDKALKVFKSCPPDVFNHNLETVPSLYPKVRPGANYEYSLKLLQKFKQQHPLVISKSGLMLGVGESEKQVINVLKDLRRHNVDMLTIGQYLQPSKYHLAVETYIHPNQFDKYRKIALKLGFIRVASGPMVRSSYHANLQIKGKLII</sequence>
<accession>A5CWR6</accession>
<reference key="1">
    <citation type="journal article" date="2007" name="Curr. Biol.">
        <title>Reduced genome of the thioautotrophic intracellular symbiont in a deep-sea clam, Calyptogena okutanii.</title>
        <authorList>
            <person name="Kuwahara H."/>
            <person name="Yoshida T."/>
            <person name="Takaki Y."/>
            <person name="Shimamura S."/>
            <person name="Nishi S."/>
            <person name="Harada M."/>
            <person name="Matsuyama K."/>
            <person name="Takishita K."/>
            <person name="Kawato M."/>
            <person name="Uematsu K."/>
            <person name="Fujiwara Y."/>
            <person name="Sato T."/>
            <person name="Kato C."/>
            <person name="Kitagawa M."/>
            <person name="Kato I."/>
            <person name="Maruyama T."/>
        </authorList>
    </citation>
    <scope>NUCLEOTIDE SEQUENCE [LARGE SCALE GENOMIC DNA]</scope>
    <source>
        <strain>HA</strain>
    </source>
</reference>
<dbReference type="EC" id="2.8.1.8" evidence="1"/>
<dbReference type="EMBL" id="AP009247">
    <property type="protein sequence ID" value="BAF61617.1"/>
    <property type="molecule type" value="Genomic_DNA"/>
</dbReference>
<dbReference type="RefSeq" id="WP_011929887.1">
    <property type="nucleotide sequence ID" value="NC_009465.1"/>
</dbReference>
<dbReference type="SMR" id="A5CWR6"/>
<dbReference type="STRING" id="412965.COSY_0498"/>
<dbReference type="KEGG" id="vok:COSY_0498"/>
<dbReference type="eggNOG" id="COG0320">
    <property type="taxonomic scope" value="Bacteria"/>
</dbReference>
<dbReference type="HOGENOM" id="CLU_033144_2_1_6"/>
<dbReference type="OrthoDB" id="9787898at2"/>
<dbReference type="UniPathway" id="UPA00538">
    <property type="reaction ID" value="UER00593"/>
</dbReference>
<dbReference type="Proteomes" id="UP000000247">
    <property type="component" value="Chromosome"/>
</dbReference>
<dbReference type="GO" id="GO:0005737">
    <property type="term" value="C:cytoplasm"/>
    <property type="evidence" value="ECO:0007669"/>
    <property type="project" value="UniProtKB-SubCell"/>
</dbReference>
<dbReference type="GO" id="GO:0051539">
    <property type="term" value="F:4 iron, 4 sulfur cluster binding"/>
    <property type="evidence" value="ECO:0007669"/>
    <property type="project" value="UniProtKB-UniRule"/>
</dbReference>
<dbReference type="GO" id="GO:0016992">
    <property type="term" value="F:lipoate synthase activity"/>
    <property type="evidence" value="ECO:0007669"/>
    <property type="project" value="UniProtKB-UniRule"/>
</dbReference>
<dbReference type="GO" id="GO:0046872">
    <property type="term" value="F:metal ion binding"/>
    <property type="evidence" value="ECO:0007669"/>
    <property type="project" value="UniProtKB-KW"/>
</dbReference>
<dbReference type="FunFam" id="3.20.20.70:FF:000040">
    <property type="entry name" value="Lipoyl synthase"/>
    <property type="match status" value="1"/>
</dbReference>
<dbReference type="Gene3D" id="3.20.20.70">
    <property type="entry name" value="Aldolase class I"/>
    <property type="match status" value="1"/>
</dbReference>
<dbReference type="HAMAP" id="MF_00206">
    <property type="entry name" value="Lipoyl_synth"/>
    <property type="match status" value="1"/>
</dbReference>
<dbReference type="InterPro" id="IPR013785">
    <property type="entry name" value="Aldolase_TIM"/>
</dbReference>
<dbReference type="InterPro" id="IPR006638">
    <property type="entry name" value="Elp3/MiaA/NifB-like_rSAM"/>
</dbReference>
<dbReference type="InterPro" id="IPR031691">
    <property type="entry name" value="LIAS_N"/>
</dbReference>
<dbReference type="InterPro" id="IPR003698">
    <property type="entry name" value="Lipoyl_synth"/>
</dbReference>
<dbReference type="InterPro" id="IPR007197">
    <property type="entry name" value="rSAM"/>
</dbReference>
<dbReference type="NCBIfam" id="TIGR00510">
    <property type="entry name" value="lipA"/>
    <property type="match status" value="1"/>
</dbReference>
<dbReference type="NCBIfam" id="NF004019">
    <property type="entry name" value="PRK05481.1"/>
    <property type="match status" value="1"/>
</dbReference>
<dbReference type="NCBIfam" id="NF009544">
    <property type="entry name" value="PRK12928.1"/>
    <property type="match status" value="1"/>
</dbReference>
<dbReference type="PANTHER" id="PTHR10949">
    <property type="entry name" value="LIPOYL SYNTHASE"/>
    <property type="match status" value="1"/>
</dbReference>
<dbReference type="PANTHER" id="PTHR10949:SF0">
    <property type="entry name" value="LIPOYL SYNTHASE, MITOCHONDRIAL"/>
    <property type="match status" value="1"/>
</dbReference>
<dbReference type="Pfam" id="PF16881">
    <property type="entry name" value="LIAS_N"/>
    <property type="match status" value="1"/>
</dbReference>
<dbReference type="Pfam" id="PF04055">
    <property type="entry name" value="Radical_SAM"/>
    <property type="match status" value="1"/>
</dbReference>
<dbReference type="PIRSF" id="PIRSF005963">
    <property type="entry name" value="Lipoyl_synth"/>
    <property type="match status" value="1"/>
</dbReference>
<dbReference type="SFLD" id="SFLDF00271">
    <property type="entry name" value="lipoyl_synthase"/>
    <property type="match status" value="1"/>
</dbReference>
<dbReference type="SFLD" id="SFLDG01058">
    <property type="entry name" value="lipoyl_synthase_like"/>
    <property type="match status" value="1"/>
</dbReference>
<dbReference type="SMART" id="SM00729">
    <property type="entry name" value="Elp3"/>
    <property type="match status" value="1"/>
</dbReference>
<dbReference type="SUPFAM" id="SSF102114">
    <property type="entry name" value="Radical SAM enzymes"/>
    <property type="match status" value="1"/>
</dbReference>
<dbReference type="PROSITE" id="PS51918">
    <property type="entry name" value="RADICAL_SAM"/>
    <property type="match status" value="1"/>
</dbReference>
<gene>
    <name evidence="1" type="primary">lipA</name>
    <name type="ordered locus">COSY_0498</name>
</gene>
<evidence type="ECO:0000255" key="1">
    <source>
        <dbReference type="HAMAP-Rule" id="MF_00206"/>
    </source>
</evidence>
<evidence type="ECO:0000255" key="2">
    <source>
        <dbReference type="PROSITE-ProRule" id="PRU01266"/>
    </source>
</evidence>
<organism>
    <name type="scientific">Vesicomyosocius okutanii subsp. Calyptogena okutanii (strain HA)</name>
    <dbReference type="NCBI Taxonomy" id="412965"/>
    <lineage>
        <taxon>Bacteria</taxon>
        <taxon>Pseudomonadati</taxon>
        <taxon>Pseudomonadota</taxon>
        <taxon>Gammaproteobacteria</taxon>
        <taxon>Candidatus Pseudothioglobaceae</taxon>
        <taxon>Candidatus Vesicomyosocius</taxon>
    </lineage>
</organism>
<comment type="function">
    <text evidence="1">Catalyzes the radical-mediated insertion of two sulfur atoms into the C-6 and C-8 positions of the octanoyl moiety bound to the lipoyl domains of lipoate-dependent enzymes, thereby converting the octanoylated domains into lipoylated derivatives.</text>
</comment>
<comment type="catalytic activity">
    <reaction evidence="1">
        <text>[[Fe-S] cluster scaffold protein carrying a second [4Fe-4S](2+) cluster] + N(6)-octanoyl-L-lysyl-[protein] + 2 oxidized [2Fe-2S]-[ferredoxin] + 2 S-adenosyl-L-methionine + 4 H(+) = [[Fe-S] cluster scaffold protein] + N(6)-[(R)-dihydrolipoyl]-L-lysyl-[protein] + 4 Fe(3+) + 2 hydrogen sulfide + 2 5'-deoxyadenosine + 2 L-methionine + 2 reduced [2Fe-2S]-[ferredoxin]</text>
        <dbReference type="Rhea" id="RHEA:16585"/>
        <dbReference type="Rhea" id="RHEA-COMP:9928"/>
        <dbReference type="Rhea" id="RHEA-COMP:10000"/>
        <dbReference type="Rhea" id="RHEA-COMP:10001"/>
        <dbReference type="Rhea" id="RHEA-COMP:10475"/>
        <dbReference type="Rhea" id="RHEA-COMP:14568"/>
        <dbReference type="Rhea" id="RHEA-COMP:14569"/>
        <dbReference type="ChEBI" id="CHEBI:15378"/>
        <dbReference type="ChEBI" id="CHEBI:17319"/>
        <dbReference type="ChEBI" id="CHEBI:29034"/>
        <dbReference type="ChEBI" id="CHEBI:29919"/>
        <dbReference type="ChEBI" id="CHEBI:33722"/>
        <dbReference type="ChEBI" id="CHEBI:33737"/>
        <dbReference type="ChEBI" id="CHEBI:33738"/>
        <dbReference type="ChEBI" id="CHEBI:57844"/>
        <dbReference type="ChEBI" id="CHEBI:59789"/>
        <dbReference type="ChEBI" id="CHEBI:78809"/>
        <dbReference type="ChEBI" id="CHEBI:83100"/>
        <dbReference type="EC" id="2.8.1.8"/>
    </reaction>
</comment>
<comment type="cofactor">
    <cofactor evidence="1">
        <name>[4Fe-4S] cluster</name>
        <dbReference type="ChEBI" id="CHEBI:49883"/>
    </cofactor>
    <text evidence="1">Binds 2 [4Fe-4S] clusters per subunit. One cluster is coordinated with 3 cysteines and an exchangeable S-adenosyl-L-methionine.</text>
</comment>
<comment type="pathway">
    <text evidence="1">Protein modification; protein lipoylation via endogenous pathway; protein N(6)-(lipoyl)lysine from octanoyl-[acyl-carrier-protein]: step 2/2.</text>
</comment>
<comment type="subcellular location">
    <subcellularLocation>
        <location evidence="1">Cytoplasm</location>
    </subcellularLocation>
</comment>
<comment type="similarity">
    <text evidence="1">Belongs to the radical SAM superfamily. Lipoyl synthase family.</text>
</comment>
<proteinExistence type="inferred from homology"/>
<name>LIPA_VESOH</name>